<keyword id="KW-1185">Reference proteome</keyword>
<feature type="chain" id="PRO_0000066101" description="Uncharacterized protein Cgl0967/cg1104">
    <location>
        <begin position="1"/>
        <end position="426"/>
    </location>
</feature>
<name>Y967_CORGL</name>
<protein>
    <recommendedName>
        <fullName>Uncharacterized protein Cgl0967/cg1104</fullName>
    </recommendedName>
    <alternativeName>
        <fullName>ORF2</fullName>
    </alternativeName>
</protein>
<proteinExistence type="predicted"/>
<dbReference type="EMBL" id="X60312">
    <property type="protein sequence ID" value="CAA42856.1"/>
    <property type="molecule type" value="Genomic_DNA"/>
</dbReference>
<dbReference type="EMBL" id="BA000036">
    <property type="protein sequence ID" value="BAB98360.1"/>
    <property type="molecule type" value="Genomic_DNA"/>
</dbReference>
<dbReference type="EMBL" id="BX927150">
    <property type="protein sequence ID" value="CAF19674.1"/>
    <property type="molecule type" value="Genomic_DNA"/>
</dbReference>
<dbReference type="PIR" id="S28812">
    <property type="entry name" value="S28812"/>
</dbReference>
<dbReference type="RefSeq" id="NP_600194.1">
    <property type="nucleotide sequence ID" value="NC_003450.3"/>
</dbReference>
<dbReference type="RefSeq" id="WP_011014014.1">
    <property type="nucleotide sequence ID" value="NC_006958.1"/>
</dbReference>
<dbReference type="SMR" id="P35866"/>
<dbReference type="STRING" id="196627.cg1104"/>
<dbReference type="ESTHER" id="corgl-y967">
    <property type="family name" value="A85-Est-Putative"/>
</dbReference>
<dbReference type="KEGG" id="cgb:cg1104"/>
<dbReference type="KEGG" id="cgl:Cgl0967"/>
<dbReference type="PATRIC" id="fig|196627.13.peg.952"/>
<dbReference type="eggNOG" id="COG0627">
    <property type="taxonomic scope" value="Bacteria"/>
</dbReference>
<dbReference type="HOGENOM" id="CLU_037947_2_0_11"/>
<dbReference type="OrthoDB" id="3723842at2"/>
<dbReference type="BioCyc" id="CORYNE:G18NG-10538-MONOMER"/>
<dbReference type="Proteomes" id="UP000000582">
    <property type="component" value="Chromosome"/>
</dbReference>
<dbReference type="Proteomes" id="UP000001009">
    <property type="component" value="Chromosome"/>
</dbReference>
<dbReference type="GO" id="GO:0016747">
    <property type="term" value="F:acyltransferase activity, transferring groups other than amino-acyl groups"/>
    <property type="evidence" value="ECO:0007669"/>
    <property type="project" value="TreeGrafter"/>
</dbReference>
<dbReference type="Gene3D" id="3.40.50.1820">
    <property type="entry name" value="alpha/beta hydrolase"/>
    <property type="match status" value="1"/>
</dbReference>
<dbReference type="InterPro" id="IPR029058">
    <property type="entry name" value="AB_hydrolase_fold"/>
</dbReference>
<dbReference type="InterPro" id="IPR000801">
    <property type="entry name" value="Esterase-like"/>
</dbReference>
<dbReference type="InterPro" id="IPR050583">
    <property type="entry name" value="Mycobacterial_A85_antigen"/>
</dbReference>
<dbReference type="PANTHER" id="PTHR48098:SF1">
    <property type="entry name" value="DIACYLGLYCEROL ACYLTRANSFERASE_MYCOLYLTRANSFERASE AG85A"/>
    <property type="match status" value="1"/>
</dbReference>
<dbReference type="PANTHER" id="PTHR48098">
    <property type="entry name" value="ENTEROCHELIN ESTERASE-RELATED"/>
    <property type="match status" value="1"/>
</dbReference>
<dbReference type="Pfam" id="PF00756">
    <property type="entry name" value="Esterase"/>
    <property type="match status" value="1"/>
</dbReference>
<dbReference type="SUPFAM" id="SSF53474">
    <property type="entry name" value="alpha/beta-Hydrolases"/>
    <property type="match status" value="1"/>
</dbReference>
<sequence length="426" mass="45731">MNEWRTVSLVDSTALTVIISVAVFTSAVALLGVVKKRSRWRVLGALISSAVLTSGAWVVIEKLWKPFPDPNPWTIYLSAGLAVFPLLSILFRTGRTRILMATLTVIALVNTAAVINVIYQPYPTLGSFNPVPTAVSMSYADFESQTTAPTMDDREVGALVQVPLAGTTDDSTSGFDARDAYAYIPPAYWDNPSLQLPVLVLMPGNPGQPDQWFSSGNADQTADNFQATHDGISPIVISVDGTGSFSGNPACVDSDAQSVMTYLSHDVPMLIKQKFRVNQDQRTWTIGGLSYGGTCALQIMTNHPEAYGSFLDFSGQEEPTLGTRQQTVDQLFGGDEDAFKAVNPEDLLNQAISSGAHTYSGISGRFIAGSNDKSAVSALSHLDNLSNQAGMSTTFDTVAGGHSFQVWRVALANTFDWVAKRGGLQV</sequence>
<organism>
    <name type="scientific">Corynebacterium glutamicum (strain ATCC 13032 / DSM 20300 / JCM 1318 / BCRC 11384 / CCUG 27702 / LMG 3730 / NBRC 12168 / NCIMB 10025 / NRRL B-2784 / 534)</name>
    <dbReference type="NCBI Taxonomy" id="196627"/>
    <lineage>
        <taxon>Bacteria</taxon>
        <taxon>Bacillati</taxon>
        <taxon>Actinomycetota</taxon>
        <taxon>Actinomycetes</taxon>
        <taxon>Mycobacteriales</taxon>
        <taxon>Corynebacteriaceae</taxon>
        <taxon>Corynebacterium</taxon>
    </lineage>
</organism>
<gene>
    <name type="ordered locus">Cgl0967</name>
    <name type="ordered locus">cg1104</name>
</gene>
<accession>P35866</accession>
<reference key="1">
    <citation type="journal article" date="1991" name="Mol. Microbiol.">
        <title>Molecular analysis of the Corynebacterium glutamicum lysl gene involved in lysine uptake.</title>
        <authorList>
            <person name="Seep-Feldhaus A.H."/>
            <person name="Kalinowski J."/>
            <person name="Puehler A."/>
        </authorList>
    </citation>
    <scope>NUCLEOTIDE SEQUENCE [GENOMIC DNA]</scope>
    <source>
        <strain>ATCC 13032 / DSM 20300 / JCM 1318 / BCRC 11384 / CCUG 27702 / LMG 3730 / NBRC 12168 / NCIMB 10025 / NRRL B-2784 / 534</strain>
    </source>
</reference>
<reference key="2">
    <citation type="journal article" date="2003" name="Appl. Microbiol. Biotechnol.">
        <title>The Corynebacterium glutamicum genome: features and impacts on biotechnological processes.</title>
        <authorList>
            <person name="Ikeda M."/>
            <person name="Nakagawa S."/>
        </authorList>
    </citation>
    <scope>NUCLEOTIDE SEQUENCE [LARGE SCALE GENOMIC DNA]</scope>
    <source>
        <strain>ATCC 13032 / DSM 20300 / JCM 1318 / BCRC 11384 / CCUG 27702 / LMG 3730 / NBRC 12168 / NCIMB 10025 / NRRL B-2784 / 534</strain>
    </source>
</reference>
<reference key="3">
    <citation type="journal article" date="2003" name="J. Biotechnol.">
        <title>The complete Corynebacterium glutamicum ATCC 13032 genome sequence and its impact on the production of L-aspartate-derived amino acids and vitamins.</title>
        <authorList>
            <person name="Kalinowski J."/>
            <person name="Bathe B."/>
            <person name="Bartels D."/>
            <person name="Bischoff N."/>
            <person name="Bott M."/>
            <person name="Burkovski A."/>
            <person name="Dusch N."/>
            <person name="Eggeling L."/>
            <person name="Eikmanns B.J."/>
            <person name="Gaigalat L."/>
            <person name="Goesmann A."/>
            <person name="Hartmann M."/>
            <person name="Huthmacher K."/>
            <person name="Kraemer R."/>
            <person name="Linke B."/>
            <person name="McHardy A.C."/>
            <person name="Meyer F."/>
            <person name="Moeckel B."/>
            <person name="Pfefferle W."/>
            <person name="Puehler A."/>
            <person name="Rey D.A."/>
            <person name="Rueckert C."/>
            <person name="Rupp O."/>
            <person name="Sahm H."/>
            <person name="Wendisch V.F."/>
            <person name="Wiegraebe I."/>
            <person name="Tauch A."/>
        </authorList>
    </citation>
    <scope>NUCLEOTIDE SEQUENCE [LARGE SCALE GENOMIC DNA]</scope>
    <source>
        <strain>ATCC 13032 / DSM 20300 / JCM 1318 / BCRC 11384 / CCUG 27702 / LMG 3730 / NBRC 12168 / NCIMB 10025 / NRRL B-2784 / 534</strain>
    </source>
</reference>